<organism>
    <name type="scientific">Kluyveromyces lactis (strain ATCC 8585 / CBS 2359 / DSM 70799 / NBRC 1267 / NRRL Y-1140 / WM37)</name>
    <name type="common">Yeast</name>
    <name type="synonym">Candida sphaerica</name>
    <dbReference type="NCBI Taxonomy" id="284590"/>
    <lineage>
        <taxon>Eukaryota</taxon>
        <taxon>Fungi</taxon>
        <taxon>Dikarya</taxon>
        <taxon>Ascomycota</taxon>
        <taxon>Saccharomycotina</taxon>
        <taxon>Saccharomycetes</taxon>
        <taxon>Saccharomycetales</taxon>
        <taxon>Saccharomycetaceae</taxon>
        <taxon>Kluyveromyces</taxon>
    </lineage>
</organism>
<evidence type="ECO:0000250" key="1"/>
<evidence type="ECO:0000305" key="2"/>
<feature type="chain" id="PRO_0000292445" description="Cytoplasmic dynein intermediate light chain DYN3">
    <location>
        <begin position="1"/>
        <end position="370"/>
    </location>
</feature>
<accession>Q6CX98</accession>
<protein>
    <recommendedName>
        <fullName>Cytoplasmic dynein intermediate light chain DYN3</fullName>
        <shortName>Dynein protein 3</shortName>
    </recommendedName>
</protein>
<name>DYN3_KLULA</name>
<gene>
    <name type="primary">DYN3</name>
    <name type="ordered locus">KLLA0A10087g</name>
</gene>
<reference key="1">
    <citation type="journal article" date="2004" name="Nature">
        <title>Genome evolution in yeasts.</title>
        <authorList>
            <person name="Dujon B."/>
            <person name="Sherman D."/>
            <person name="Fischer G."/>
            <person name="Durrens P."/>
            <person name="Casaregola S."/>
            <person name="Lafontaine I."/>
            <person name="de Montigny J."/>
            <person name="Marck C."/>
            <person name="Neuveglise C."/>
            <person name="Talla E."/>
            <person name="Goffard N."/>
            <person name="Frangeul L."/>
            <person name="Aigle M."/>
            <person name="Anthouard V."/>
            <person name="Babour A."/>
            <person name="Barbe V."/>
            <person name="Barnay S."/>
            <person name="Blanchin S."/>
            <person name="Beckerich J.-M."/>
            <person name="Beyne E."/>
            <person name="Bleykasten C."/>
            <person name="Boisrame A."/>
            <person name="Boyer J."/>
            <person name="Cattolico L."/>
            <person name="Confanioleri F."/>
            <person name="de Daruvar A."/>
            <person name="Despons L."/>
            <person name="Fabre E."/>
            <person name="Fairhead C."/>
            <person name="Ferry-Dumazet H."/>
            <person name="Groppi A."/>
            <person name="Hantraye F."/>
            <person name="Hennequin C."/>
            <person name="Jauniaux N."/>
            <person name="Joyet P."/>
            <person name="Kachouri R."/>
            <person name="Kerrest A."/>
            <person name="Koszul R."/>
            <person name="Lemaire M."/>
            <person name="Lesur I."/>
            <person name="Ma L."/>
            <person name="Muller H."/>
            <person name="Nicaud J.-M."/>
            <person name="Nikolski M."/>
            <person name="Oztas S."/>
            <person name="Ozier-Kalogeropoulos O."/>
            <person name="Pellenz S."/>
            <person name="Potier S."/>
            <person name="Richard G.-F."/>
            <person name="Straub M.-L."/>
            <person name="Suleau A."/>
            <person name="Swennen D."/>
            <person name="Tekaia F."/>
            <person name="Wesolowski-Louvel M."/>
            <person name="Westhof E."/>
            <person name="Wirth B."/>
            <person name="Zeniou-Meyer M."/>
            <person name="Zivanovic Y."/>
            <person name="Bolotin-Fukuhara M."/>
            <person name="Thierry A."/>
            <person name="Bouchier C."/>
            <person name="Caudron B."/>
            <person name="Scarpelli C."/>
            <person name="Gaillardin C."/>
            <person name="Weissenbach J."/>
            <person name="Wincker P."/>
            <person name="Souciet J.-L."/>
        </authorList>
    </citation>
    <scope>NUCLEOTIDE SEQUENCE [LARGE SCALE GENOMIC DNA]</scope>
    <source>
        <strain>ATCC 8585 / CBS 2359 / DSM 70799 / NBRC 1267 / NRRL Y-1140 / WM37</strain>
    </source>
</reference>
<proteinExistence type="inferred from homology"/>
<keyword id="KW-0963">Cytoplasm</keyword>
<keyword id="KW-0206">Cytoskeleton</keyword>
<keyword id="KW-0243">Dynein</keyword>
<keyword id="KW-0493">Microtubule</keyword>
<keyword id="KW-0505">Motor protein</keyword>
<keyword id="KW-1185">Reference proteome</keyword>
<sequence length="370" mass="41556">MATKLEAFINDLRLQCETNDTTKYVSIVLFCEKETTLKLFFQYIDGIDTNSEPKLAVLSPTLSPVGYYTKEITTEDGWQVILNITCIPPPWKSSSIDLLPSILKSDPEKSSKRFVLLLDWINEDQSYWLEDIEGLFVQLKQVSPETKAAGSVMMLHSDYCKHLENTHTKWSSTAIDFMHQSLRTLALHLKISLYSDLKNSVLAAKSAVGVPLSTEEQKSLIDMVNLENVNVTYGSDSLNKIAMIDENFPLSVYKDNLSTLKHDFSDVIPEIKPRNMGSCAITEPIKPLPDLQSLIPDVQGQLSHLYELQRKNSSLKRVTNQPAVVQDIGQDNTMALNDIASDNNHLQHVPDDDSALDSLVHGIVQRHQIS</sequence>
<comment type="function">
    <text evidence="1">Component of the cytoplasmic dynein which acts as a motor for the intracellular retrograde motility of vesicles and organelles along microtubules. May play an important role in the proper orientation of the mitotic spindle into the budding daughter cell yeast. Probably required for normal progression of the cell cycle (By similarity).</text>
</comment>
<comment type="subunit">
    <text evidence="1">The cytoplasmic dynein is composed of at least two heavy chains and a number of intermediate and light chains.</text>
</comment>
<comment type="subcellular location">
    <subcellularLocation>
        <location evidence="1">Cytoplasm</location>
        <location evidence="1">Cytoskeleton</location>
    </subcellularLocation>
</comment>
<comment type="similarity">
    <text evidence="2">Belongs to the dynein light intermediate chain DYN3 family.</text>
</comment>
<dbReference type="EMBL" id="CR382121">
    <property type="protein sequence ID" value="CAH03029.1"/>
    <property type="molecule type" value="Genomic_DNA"/>
</dbReference>
<dbReference type="RefSeq" id="XP_451441.1">
    <property type="nucleotide sequence ID" value="XM_451441.1"/>
</dbReference>
<dbReference type="FunCoup" id="Q6CX98">
    <property type="interactions" value="45"/>
</dbReference>
<dbReference type="STRING" id="284590.Q6CX98"/>
<dbReference type="PaxDb" id="284590-Q6CX98"/>
<dbReference type="KEGG" id="kla:KLLA0_A10087g"/>
<dbReference type="eggNOG" id="ENOG502S4QG">
    <property type="taxonomic scope" value="Eukaryota"/>
</dbReference>
<dbReference type="HOGENOM" id="CLU_748153_0_0_1"/>
<dbReference type="InParanoid" id="Q6CX98"/>
<dbReference type="OMA" id="WINEDQS"/>
<dbReference type="Proteomes" id="UP000000598">
    <property type="component" value="Chromosome A"/>
</dbReference>
<dbReference type="GO" id="GO:0005737">
    <property type="term" value="C:cytoplasm"/>
    <property type="evidence" value="ECO:0007669"/>
    <property type="project" value="UniProtKB-KW"/>
</dbReference>
<dbReference type="GO" id="GO:0030286">
    <property type="term" value="C:dynein complex"/>
    <property type="evidence" value="ECO:0007669"/>
    <property type="project" value="UniProtKB-KW"/>
</dbReference>
<dbReference type="GO" id="GO:0005874">
    <property type="term" value="C:microtubule"/>
    <property type="evidence" value="ECO:0007669"/>
    <property type="project" value="UniProtKB-KW"/>
</dbReference>